<accession>B7MKE7</accession>
<keyword id="KW-1185">Reference proteome</keyword>
<gene>
    <name evidence="1" type="primary">nrdI</name>
    <name type="ordered locus">ECS88_2940</name>
</gene>
<protein>
    <recommendedName>
        <fullName evidence="1">Protein NrdI</fullName>
    </recommendedName>
</protein>
<feature type="chain" id="PRO_1000117707" description="Protein NrdI">
    <location>
        <begin position="1"/>
        <end position="136"/>
    </location>
</feature>
<proteinExistence type="inferred from homology"/>
<dbReference type="EMBL" id="CU928161">
    <property type="protein sequence ID" value="CAR04187.1"/>
    <property type="molecule type" value="Genomic_DNA"/>
</dbReference>
<dbReference type="RefSeq" id="WP_000080951.1">
    <property type="nucleotide sequence ID" value="NC_011742.1"/>
</dbReference>
<dbReference type="SMR" id="B7MKE7"/>
<dbReference type="KEGG" id="ecz:ECS88_2940"/>
<dbReference type="HOGENOM" id="CLU_114845_0_0_6"/>
<dbReference type="Proteomes" id="UP000000747">
    <property type="component" value="Chromosome"/>
</dbReference>
<dbReference type="GO" id="GO:0010181">
    <property type="term" value="F:FMN binding"/>
    <property type="evidence" value="ECO:0007669"/>
    <property type="project" value="InterPro"/>
</dbReference>
<dbReference type="GO" id="GO:0036211">
    <property type="term" value="P:protein modification process"/>
    <property type="evidence" value="ECO:0007669"/>
    <property type="project" value="InterPro"/>
</dbReference>
<dbReference type="FunFam" id="3.40.50.360:FF:000005">
    <property type="entry name" value="Protein NrdI"/>
    <property type="match status" value="1"/>
</dbReference>
<dbReference type="Gene3D" id="3.40.50.360">
    <property type="match status" value="1"/>
</dbReference>
<dbReference type="HAMAP" id="MF_00128">
    <property type="entry name" value="NrdI"/>
    <property type="match status" value="1"/>
</dbReference>
<dbReference type="InterPro" id="IPR029039">
    <property type="entry name" value="Flavoprotein-like_sf"/>
</dbReference>
<dbReference type="InterPro" id="IPR020852">
    <property type="entry name" value="RNR_Ib_NrdI_bac"/>
</dbReference>
<dbReference type="InterPro" id="IPR004465">
    <property type="entry name" value="RNR_NrdI"/>
</dbReference>
<dbReference type="NCBIfam" id="TIGR00333">
    <property type="entry name" value="nrdI"/>
    <property type="match status" value="1"/>
</dbReference>
<dbReference type="PANTHER" id="PTHR37297">
    <property type="entry name" value="PROTEIN NRDI"/>
    <property type="match status" value="1"/>
</dbReference>
<dbReference type="PANTHER" id="PTHR37297:SF1">
    <property type="entry name" value="PROTEIN NRDI"/>
    <property type="match status" value="1"/>
</dbReference>
<dbReference type="Pfam" id="PF07972">
    <property type="entry name" value="Flavodoxin_NdrI"/>
    <property type="match status" value="1"/>
</dbReference>
<dbReference type="PIRSF" id="PIRSF005087">
    <property type="entry name" value="NrdI"/>
    <property type="match status" value="1"/>
</dbReference>
<dbReference type="SUPFAM" id="SSF52218">
    <property type="entry name" value="Flavoproteins"/>
    <property type="match status" value="1"/>
</dbReference>
<reference key="1">
    <citation type="journal article" date="2009" name="PLoS Genet.">
        <title>Organised genome dynamics in the Escherichia coli species results in highly diverse adaptive paths.</title>
        <authorList>
            <person name="Touchon M."/>
            <person name="Hoede C."/>
            <person name="Tenaillon O."/>
            <person name="Barbe V."/>
            <person name="Baeriswyl S."/>
            <person name="Bidet P."/>
            <person name="Bingen E."/>
            <person name="Bonacorsi S."/>
            <person name="Bouchier C."/>
            <person name="Bouvet O."/>
            <person name="Calteau A."/>
            <person name="Chiapello H."/>
            <person name="Clermont O."/>
            <person name="Cruveiller S."/>
            <person name="Danchin A."/>
            <person name="Diard M."/>
            <person name="Dossat C."/>
            <person name="Karoui M.E."/>
            <person name="Frapy E."/>
            <person name="Garry L."/>
            <person name="Ghigo J.M."/>
            <person name="Gilles A.M."/>
            <person name="Johnson J."/>
            <person name="Le Bouguenec C."/>
            <person name="Lescat M."/>
            <person name="Mangenot S."/>
            <person name="Martinez-Jehanne V."/>
            <person name="Matic I."/>
            <person name="Nassif X."/>
            <person name="Oztas S."/>
            <person name="Petit M.A."/>
            <person name="Pichon C."/>
            <person name="Rouy Z."/>
            <person name="Ruf C.S."/>
            <person name="Schneider D."/>
            <person name="Tourret J."/>
            <person name="Vacherie B."/>
            <person name="Vallenet D."/>
            <person name="Medigue C."/>
            <person name="Rocha E.P.C."/>
            <person name="Denamur E."/>
        </authorList>
    </citation>
    <scope>NUCLEOTIDE SEQUENCE [LARGE SCALE GENOMIC DNA]</scope>
    <source>
        <strain>S88 / ExPEC</strain>
    </source>
</reference>
<evidence type="ECO:0000255" key="1">
    <source>
        <dbReference type="HAMAP-Rule" id="MF_00128"/>
    </source>
</evidence>
<organism>
    <name type="scientific">Escherichia coli O45:K1 (strain S88 / ExPEC)</name>
    <dbReference type="NCBI Taxonomy" id="585035"/>
    <lineage>
        <taxon>Bacteria</taxon>
        <taxon>Pseudomonadati</taxon>
        <taxon>Pseudomonadota</taxon>
        <taxon>Gammaproteobacteria</taxon>
        <taxon>Enterobacterales</taxon>
        <taxon>Enterobacteriaceae</taxon>
        <taxon>Escherichia</taxon>
    </lineage>
</organism>
<name>NRDI_ECO45</name>
<comment type="function">
    <text evidence="1">Probably involved in ribonucleotide reductase function.</text>
</comment>
<comment type="similarity">
    <text evidence="1">Belongs to the NrdI family.</text>
</comment>
<sequence>MSQLVYFSSSSENTQRFIERLGLPAVRIPLNERERIQVDEPYILIVPSYGGGGTAGAVPRQVIRFLNDEHNRALLRGVIASGNRNFGEAYGRAGDVIARKCSVPWLYRFELMGTQSDIENVRKGVTEFWQRQPQNA</sequence>